<protein>
    <recommendedName>
        <fullName evidence="1">7-cyano-7-deazaguanine synthase</fullName>
        <ecNumber evidence="1">6.3.4.20</ecNumber>
    </recommendedName>
    <alternativeName>
        <fullName evidence="1">7-cyano-7-carbaguanine synthase</fullName>
    </alternativeName>
    <alternativeName>
        <fullName evidence="1">PreQ(0) synthase</fullName>
    </alternativeName>
    <alternativeName>
        <fullName evidence="1">Queuosine biosynthesis protein QueC</fullName>
    </alternativeName>
</protein>
<evidence type="ECO:0000255" key="1">
    <source>
        <dbReference type="HAMAP-Rule" id="MF_01633"/>
    </source>
</evidence>
<organism>
    <name type="scientific">Shewanella frigidimarina (strain NCIMB 400)</name>
    <dbReference type="NCBI Taxonomy" id="318167"/>
    <lineage>
        <taxon>Bacteria</taxon>
        <taxon>Pseudomonadati</taxon>
        <taxon>Pseudomonadota</taxon>
        <taxon>Gammaproteobacteria</taxon>
        <taxon>Alteromonadales</taxon>
        <taxon>Shewanellaceae</taxon>
        <taxon>Shewanella</taxon>
    </lineage>
</organism>
<reference key="1">
    <citation type="submission" date="2006-08" db="EMBL/GenBank/DDBJ databases">
        <title>Complete sequence of Shewanella frigidimarina NCIMB 400.</title>
        <authorList>
            <consortium name="US DOE Joint Genome Institute"/>
            <person name="Copeland A."/>
            <person name="Lucas S."/>
            <person name="Lapidus A."/>
            <person name="Barry K."/>
            <person name="Detter J.C."/>
            <person name="Glavina del Rio T."/>
            <person name="Hammon N."/>
            <person name="Israni S."/>
            <person name="Dalin E."/>
            <person name="Tice H."/>
            <person name="Pitluck S."/>
            <person name="Fredrickson J.K."/>
            <person name="Kolker E."/>
            <person name="McCuel L.A."/>
            <person name="DiChristina T."/>
            <person name="Nealson K.H."/>
            <person name="Newman D."/>
            <person name="Tiedje J.M."/>
            <person name="Zhou J."/>
            <person name="Romine M.F."/>
            <person name="Culley D.E."/>
            <person name="Serres M."/>
            <person name="Chertkov O."/>
            <person name="Brettin T."/>
            <person name="Bruce D."/>
            <person name="Han C."/>
            <person name="Tapia R."/>
            <person name="Gilna P."/>
            <person name="Schmutz J."/>
            <person name="Larimer F."/>
            <person name="Land M."/>
            <person name="Hauser L."/>
            <person name="Kyrpides N."/>
            <person name="Mikhailova N."/>
            <person name="Richardson P."/>
        </authorList>
    </citation>
    <scope>NUCLEOTIDE SEQUENCE [LARGE SCALE GENOMIC DNA]</scope>
    <source>
        <strain>NCIMB 400</strain>
    </source>
</reference>
<comment type="function">
    <text evidence="1">Catalyzes the ATP-dependent conversion of 7-carboxy-7-deazaguanine (CDG) to 7-cyano-7-deazaguanine (preQ(0)).</text>
</comment>
<comment type="catalytic activity">
    <reaction evidence="1">
        <text>7-carboxy-7-deazaguanine + NH4(+) + ATP = 7-cyano-7-deazaguanine + ADP + phosphate + H2O + H(+)</text>
        <dbReference type="Rhea" id="RHEA:27982"/>
        <dbReference type="ChEBI" id="CHEBI:15377"/>
        <dbReference type="ChEBI" id="CHEBI:15378"/>
        <dbReference type="ChEBI" id="CHEBI:28938"/>
        <dbReference type="ChEBI" id="CHEBI:30616"/>
        <dbReference type="ChEBI" id="CHEBI:43474"/>
        <dbReference type="ChEBI" id="CHEBI:45075"/>
        <dbReference type="ChEBI" id="CHEBI:61036"/>
        <dbReference type="ChEBI" id="CHEBI:456216"/>
        <dbReference type="EC" id="6.3.4.20"/>
    </reaction>
</comment>
<comment type="cofactor">
    <cofactor evidence="1">
        <name>Zn(2+)</name>
        <dbReference type="ChEBI" id="CHEBI:29105"/>
    </cofactor>
    <text evidence="1">Binds 1 zinc ion per subunit.</text>
</comment>
<comment type="pathway">
    <text evidence="1">Purine metabolism; 7-cyano-7-deazaguanine biosynthesis.</text>
</comment>
<comment type="similarity">
    <text evidence="1">Belongs to the QueC family.</text>
</comment>
<name>QUEC_SHEFN</name>
<proteinExistence type="inferred from homology"/>
<sequence>MSDAKQNTPTKALVVFSGGQDSTTCLIQALSQYDEVHGITFDYGQRHRQEIEVAKSLATELKLASHKVMDTTLLNELAISALTRDAIPVSHELMNNGLPNTFVPGRNILFLTLAGIYAYQLGCDAIITGVCETDFSGYPDCRNEFVQSMQNSLALGMDKPLKIITPLMWLNKAETWALADKYQQLALVQHQTLTCYNGIVGKGCGDCPACVLRQRGLDDYLQNSQSVMDSLNSKL</sequence>
<dbReference type="EC" id="6.3.4.20" evidence="1"/>
<dbReference type="EMBL" id="CP000447">
    <property type="protein sequence ID" value="ABI71723.1"/>
    <property type="molecule type" value="Genomic_DNA"/>
</dbReference>
<dbReference type="RefSeq" id="WP_011637339.1">
    <property type="nucleotide sequence ID" value="NC_008345.1"/>
</dbReference>
<dbReference type="SMR" id="Q082U2"/>
<dbReference type="STRING" id="318167.Sfri_1876"/>
<dbReference type="KEGG" id="sfr:Sfri_1876"/>
<dbReference type="eggNOG" id="COG0603">
    <property type="taxonomic scope" value="Bacteria"/>
</dbReference>
<dbReference type="HOGENOM" id="CLU_081854_0_0_6"/>
<dbReference type="OrthoDB" id="9789567at2"/>
<dbReference type="UniPathway" id="UPA00391"/>
<dbReference type="Proteomes" id="UP000000684">
    <property type="component" value="Chromosome"/>
</dbReference>
<dbReference type="GO" id="GO:0005524">
    <property type="term" value="F:ATP binding"/>
    <property type="evidence" value="ECO:0007669"/>
    <property type="project" value="UniProtKB-UniRule"/>
</dbReference>
<dbReference type="GO" id="GO:0016879">
    <property type="term" value="F:ligase activity, forming carbon-nitrogen bonds"/>
    <property type="evidence" value="ECO:0007669"/>
    <property type="project" value="UniProtKB-UniRule"/>
</dbReference>
<dbReference type="GO" id="GO:0008270">
    <property type="term" value="F:zinc ion binding"/>
    <property type="evidence" value="ECO:0007669"/>
    <property type="project" value="UniProtKB-UniRule"/>
</dbReference>
<dbReference type="GO" id="GO:0008616">
    <property type="term" value="P:queuosine biosynthetic process"/>
    <property type="evidence" value="ECO:0007669"/>
    <property type="project" value="UniProtKB-UniRule"/>
</dbReference>
<dbReference type="CDD" id="cd01995">
    <property type="entry name" value="QueC-like"/>
    <property type="match status" value="1"/>
</dbReference>
<dbReference type="FunFam" id="3.40.50.620:FF:000017">
    <property type="entry name" value="7-cyano-7-deazaguanine synthase"/>
    <property type="match status" value="1"/>
</dbReference>
<dbReference type="Gene3D" id="3.40.50.620">
    <property type="entry name" value="HUPs"/>
    <property type="match status" value="1"/>
</dbReference>
<dbReference type="HAMAP" id="MF_01633">
    <property type="entry name" value="QueC"/>
    <property type="match status" value="1"/>
</dbReference>
<dbReference type="InterPro" id="IPR018317">
    <property type="entry name" value="QueC"/>
</dbReference>
<dbReference type="InterPro" id="IPR014729">
    <property type="entry name" value="Rossmann-like_a/b/a_fold"/>
</dbReference>
<dbReference type="NCBIfam" id="TIGR00364">
    <property type="entry name" value="7-cyano-7-deazaguanine synthase QueC"/>
    <property type="match status" value="1"/>
</dbReference>
<dbReference type="NCBIfam" id="NF008317">
    <property type="entry name" value="PRK11106.1"/>
    <property type="match status" value="1"/>
</dbReference>
<dbReference type="PANTHER" id="PTHR42914">
    <property type="entry name" value="7-CYANO-7-DEAZAGUANINE SYNTHASE"/>
    <property type="match status" value="1"/>
</dbReference>
<dbReference type="PANTHER" id="PTHR42914:SF1">
    <property type="entry name" value="7-CYANO-7-DEAZAGUANINE SYNTHASE"/>
    <property type="match status" value="1"/>
</dbReference>
<dbReference type="Pfam" id="PF06508">
    <property type="entry name" value="QueC"/>
    <property type="match status" value="1"/>
</dbReference>
<dbReference type="PIRSF" id="PIRSF006293">
    <property type="entry name" value="ExsB"/>
    <property type="match status" value="1"/>
</dbReference>
<dbReference type="SUPFAM" id="SSF52402">
    <property type="entry name" value="Adenine nucleotide alpha hydrolases-like"/>
    <property type="match status" value="1"/>
</dbReference>
<gene>
    <name evidence="1" type="primary">queC</name>
    <name type="ordered locus">Sfri_1876</name>
</gene>
<feature type="chain" id="PRO_0000336945" description="7-cyano-7-deazaguanine synthase">
    <location>
        <begin position="1"/>
        <end position="235"/>
    </location>
</feature>
<feature type="binding site" evidence="1">
    <location>
        <begin position="16"/>
        <end position="26"/>
    </location>
    <ligand>
        <name>ATP</name>
        <dbReference type="ChEBI" id="CHEBI:30616"/>
    </ligand>
</feature>
<feature type="binding site" evidence="1">
    <location>
        <position position="195"/>
    </location>
    <ligand>
        <name>Zn(2+)</name>
        <dbReference type="ChEBI" id="CHEBI:29105"/>
    </ligand>
</feature>
<feature type="binding site" evidence="1">
    <location>
        <position position="204"/>
    </location>
    <ligand>
        <name>Zn(2+)</name>
        <dbReference type="ChEBI" id="CHEBI:29105"/>
    </ligand>
</feature>
<feature type="binding site" evidence="1">
    <location>
        <position position="207"/>
    </location>
    <ligand>
        <name>Zn(2+)</name>
        <dbReference type="ChEBI" id="CHEBI:29105"/>
    </ligand>
</feature>
<feature type="binding site" evidence="1">
    <location>
        <position position="210"/>
    </location>
    <ligand>
        <name>Zn(2+)</name>
        <dbReference type="ChEBI" id="CHEBI:29105"/>
    </ligand>
</feature>
<accession>Q082U2</accession>
<keyword id="KW-0067">ATP-binding</keyword>
<keyword id="KW-0436">Ligase</keyword>
<keyword id="KW-0479">Metal-binding</keyword>
<keyword id="KW-0547">Nucleotide-binding</keyword>
<keyword id="KW-0671">Queuosine biosynthesis</keyword>
<keyword id="KW-1185">Reference proteome</keyword>
<keyword id="KW-0862">Zinc</keyword>